<gene>
    <name evidence="1" type="primary">rpsK</name>
    <name type="ordered locus">CLM_3921</name>
</gene>
<keyword id="KW-0687">Ribonucleoprotein</keyword>
<keyword id="KW-0689">Ribosomal protein</keyword>
<keyword id="KW-0694">RNA-binding</keyword>
<keyword id="KW-0699">rRNA-binding</keyword>
<sequence>MAAGMKGKRSRRRKERKNVEHGCAHIKSTFNNSIVTITDSVGNTLSWASAGGLGFRGSRKSTPFAAQMAAETAAKVAMEHGLKSIEVYVKGPGSGREAAIRSLQAAGLEVTLIKDVTPIPHNGCRPPKRRRV</sequence>
<name>RS11_CLOBJ</name>
<dbReference type="EMBL" id="CP001581">
    <property type="protein sequence ID" value="ACO83790.1"/>
    <property type="molecule type" value="Genomic_DNA"/>
</dbReference>
<dbReference type="RefSeq" id="WP_003357621.1">
    <property type="nucleotide sequence ID" value="NC_012563.1"/>
</dbReference>
<dbReference type="SMR" id="C1FMS4"/>
<dbReference type="KEGG" id="cby:CLM_3921"/>
<dbReference type="eggNOG" id="COG0100">
    <property type="taxonomic scope" value="Bacteria"/>
</dbReference>
<dbReference type="HOGENOM" id="CLU_072439_5_0_9"/>
<dbReference type="Proteomes" id="UP000001374">
    <property type="component" value="Chromosome"/>
</dbReference>
<dbReference type="GO" id="GO:1990904">
    <property type="term" value="C:ribonucleoprotein complex"/>
    <property type="evidence" value="ECO:0007669"/>
    <property type="project" value="UniProtKB-KW"/>
</dbReference>
<dbReference type="GO" id="GO:0005840">
    <property type="term" value="C:ribosome"/>
    <property type="evidence" value="ECO:0007669"/>
    <property type="project" value="UniProtKB-KW"/>
</dbReference>
<dbReference type="GO" id="GO:0019843">
    <property type="term" value="F:rRNA binding"/>
    <property type="evidence" value="ECO:0007669"/>
    <property type="project" value="UniProtKB-UniRule"/>
</dbReference>
<dbReference type="GO" id="GO:0003735">
    <property type="term" value="F:structural constituent of ribosome"/>
    <property type="evidence" value="ECO:0007669"/>
    <property type="project" value="InterPro"/>
</dbReference>
<dbReference type="GO" id="GO:0006412">
    <property type="term" value="P:translation"/>
    <property type="evidence" value="ECO:0007669"/>
    <property type="project" value="UniProtKB-UniRule"/>
</dbReference>
<dbReference type="FunFam" id="3.30.420.80:FF:000001">
    <property type="entry name" value="30S ribosomal protein S11"/>
    <property type="match status" value="1"/>
</dbReference>
<dbReference type="Gene3D" id="3.30.420.80">
    <property type="entry name" value="Ribosomal protein S11"/>
    <property type="match status" value="1"/>
</dbReference>
<dbReference type="HAMAP" id="MF_01310">
    <property type="entry name" value="Ribosomal_uS11"/>
    <property type="match status" value="1"/>
</dbReference>
<dbReference type="InterPro" id="IPR001971">
    <property type="entry name" value="Ribosomal_uS11"/>
</dbReference>
<dbReference type="InterPro" id="IPR019981">
    <property type="entry name" value="Ribosomal_uS11_bac-type"/>
</dbReference>
<dbReference type="InterPro" id="IPR018102">
    <property type="entry name" value="Ribosomal_uS11_CS"/>
</dbReference>
<dbReference type="InterPro" id="IPR036967">
    <property type="entry name" value="Ribosomal_uS11_sf"/>
</dbReference>
<dbReference type="NCBIfam" id="NF003698">
    <property type="entry name" value="PRK05309.1"/>
    <property type="match status" value="1"/>
</dbReference>
<dbReference type="NCBIfam" id="TIGR03632">
    <property type="entry name" value="uS11_bact"/>
    <property type="match status" value="1"/>
</dbReference>
<dbReference type="PANTHER" id="PTHR11759">
    <property type="entry name" value="40S RIBOSOMAL PROTEIN S14/30S RIBOSOMAL PROTEIN S11"/>
    <property type="match status" value="1"/>
</dbReference>
<dbReference type="Pfam" id="PF00411">
    <property type="entry name" value="Ribosomal_S11"/>
    <property type="match status" value="1"/>
</dbReference>
<dbReference type="PIRSF" id="PIRSF002131">
    <property type="entry name" value="Ribosomal_S11"/>
    <property type="match status" value="1"/>
</dbReference>
<dbReference type="SUPFAM" id="SSF53137">
    <property type="entry name" value="Translational machinery components"/>
    <property type="match status" value="1"/>
</dbReference>
<dbReference type="PROSITE" id="PS00054">
    <property type="entry name" value="RIBOSOMAL_S11"/>
    <property type="match status" value="1"/>
</dbReference>
<accession>C1FMS4</accession>
<evidence type="ECO:0000255" key="1">
    <source>
        <dbReference type="HAMAP-Rule" id="MF_01310"/>
    </source>
</evidence>
<evidence type="ECO:0000256" key="2">
    <source>
        <dbReference type="SAM" id="MobiDB-lite"/>
    </source>
</evidence>
<evidence type="ECO:0000305" key="3"/>
<feature type="chain" id="PRO_1000165539" description="Small ribosomal subunit protein uS11">
    <location>
        <begin position="1"/>
        <end position="132"/>
    </location>
</feature>
<feature type="region of interest" description="Disordered" evidence="2">
    <location>
        <begin position="1"/>
        <end position="20"/>
    </location>
</feature>
<feature type="compositionally biased region" description="Basic residues" evidence="2">
    <location>
        <begin position="1"/>
        <end position="16"/>
    </location>
</feature>
<organism>
    <name type="scientific">Clostridium botulinum (strain Kyoto / Type A2)</name>
    <dbReference type="NCBI Taxonomy" id="536232"/>
    <lineage>
        <taxon>Bacteria</taxon>
        <taxon>Bacillati</taxon>
        <taxon>Bacillota</taxon>
        <taxon>Clostridia</taxon>
        <taxon>Eubacteriales</taxon>
        <taxon>Clostridiaceae</taxon>
        <taxon>Clostridium</taxon>
    </lineage>
</organism>
<reference key="1">
    <citation type="submission" date="2008-10" db="EMBL/GenBank/DDBJ databases">
        <title>Genome sequence of Clostridium botulinum A2 Kyoto.</title>
        <authorList>
            <person name="Shrivastava S."/>
            <person name="Brinkac L.M."/>
            <person name="Brown J.L."/>
            <person name="Bruce D."/>
            <person name="Detter C.C."/>
            <person name="Johnson E.A."/>
            <person name="Munk C.A."/>
            <person name="Smith L.A."/>
            <person name="Smith T.J."/>
            <person name="Sutton G."/>
            <person name="Brettin T.S."/>
        </authorList>
    </citation>
    <scope>NUCLEOTIDE SEQUENCE [LARGE SCALE GENOMIC DNA]</scope>
    <source>
        <strain>Kyoto / Type A2</strain>
    </source>
</reference>
<comment type="function">
    <text evidence="1">Located on the platform of the 30S subunit, it bridges several disparate RNA helices of the 16S rRNA. Forms part of the Shine-Dalgarno cleft in the 70S ribosome.</text>
</comment>
<comment type="subunit">
    <text evidence="1">Part of the 30S ribosomal subunit. Interacts with proteins S7 and S18. Binds to IF-3.</text>
</comment>
<comment type="similarity">
    <text evidence="1">Belongs to the universal ribosomal protein uS11 family.</text>
</comment>
<protein>
    <recommendedName>
        <fullName evidence="1">Small ribosomal subunit protein uS11</fullName>
    </recommendedName>
    <alternativeName>
        <fullName evidence="3">30S ribosomal protein S11</fullName>
    </alternativeName>
</protein>
<proteinExistence type="inferred from homology"/>